<keyword id="KW-0997">Cell inner membrane</keyword>
<keyword id="KW-1003">Cell membrane</keyword>
<keyword id="KW-0472">Membrane</keyword>
<keyword id="KW-1185">Reference proteome</keyword>
<keyword id="KW-0812">Transmembrane</keyword>
<keyword id="KW-1133">Transmembrane helix</keyword>
<keyword id="KW-0813">Transport</keyword>
<proteinExistence type="evidence at protein level"/>
<protein>
    <recommendedName>
        <fullName evidence="7">Probable succinate transporter subunit YjjP</fullName>
    </recommendedName>
</protein>
<reference key="1">
    <citation type="journal article" date="1995" name="Nucleic Acids Res.">
        <title>Analysis of the Escherichia coli genome VI: DNA sequence of the region from 92.8 through 100 minutes.</title>
        <authorList>
            <person name="Burland V.D."/>
            <person name="Plunkett G. III"/>
            <person name="Sofia H.J."/>
            <person name="Daniels D.L."/>
            <person name="Blattner F.R."/>
        </authorList>
    </citation>
    <scope>NUCLEOTIDE SEQUENCE [LARGE SCALE GENOMIC DNA]</scope>
    <source>
        <strain>K12 / MG1655 / ATCC 47076</strain>
    </source>
</reference>
<reference key="2">
    <citation type="journal article" date="1997" name="Science">
        <title>The complete genome sequence of Escherichia coli K-12.</title>
        <authorList>
            <person name="Blattner F.R."/>
            <person name="Plunkett G. III"/>
            <person name="Bloch C.A."/>
            <person name="Perna N.T."/>
            <person name="Burland V."/>
            <person name="Riley M."/>
            <person name="Collado-Vides J."/>
            <person name="Glasner J.D."/>
            <person name="Rode C.K."/>
            <person name="Mayhew G.F."/>
            <person name="Gregor J."/>
            <person name="Davis N.W."/>
            <person name="Kirkpatrick H.A."/>
            <person name="Goeden M.A."/>
            <person name="Rose D.J."/>
            <person name="Mau B."/>
            <person name="Shao Y."/>
        </authorList>
    </citation>
    <scope>NUCLEOTIDE SEQUENCE [LARGE SCALE GENOMIC DNA]</scope>
    <source>
        <strain>K12 / MG1655 / ATCC 47076</strain>
    </source>
</reference>
<reference key="3">
    <citation type="journal article" date="2006" name="Mol. Syst. Biol.">
        <title>Highly accurate genome sequences of Escherichia coli K-12 strains MG1655 and W3110.</title>
        <authorList>
            <person name="Hayashi K."/>
            <person name="Morooka N."/>
            <person name="Yamamoto Y."/>
            <person name="Fujita K."/>
            <person name="Isono K."/>
            <person name="Choi S."/>
            <person name="Ohtsubo E."/>
            <person name="Baba T."/>
            <person name="Wanner B.L."/>
            <person name="Mori H."/>
            <person name="Horiuchi T."/>
        </authorList>
    </citation>
    <scope>NUCLEOTIDE SEQUENCE [LARGE SCALE GENOMIC DNA]</scope>
    <source>
        <strain>K12 / W3110 / ATCC 27325 / DSM 5911</strain>
    </source>
</reference>
<reference key="4">
    <citation type="journal article" date="2005" name="Science">
        <title>Global topology analysis of the Escherichia coli inner membrane proteome.</title>
        <authorList>
            <person name="Daley D.O."/>
            <person name="Rapp M."/>
            <person name="Granseth E."/>
            <person name="Melen K."/>
            <person name="Drew D."/>
            <person name="von Heijne G."/>
        </authorList>
    </citation>
    <scope>TOPOLOGY [LARGE SCALE ANALYSIS]</scope>
    <scope>SUBCELLULAR LOCATION</scope>
    <source>
        <strain>K12 / MG1655 / ATCC 47076</strain>
    </source>
</reference>
<reference key="5">
    <citation type="journal article" date="2008" name="J. Bacteriol.">
        <title>Regulation of the yjjQ-bglJ operon, encoding LuxR-type transcription factors, and the divergent yjjP gene by H-NS and LeuO.</title>
        <authorList>
            <person name="Stratmann T."/>
            <person name="Madhusudan S."/>
            <person name="Schnetz K."/>
        </authorList>
    </citation>
    <scope>INDUCTION</scope>
    <source>
        <strain>CSH50</strain>
    </source>
</reference>
<reference key="6">
    <citation type="journal article" date="2009" name="J. Bacteriol.">
        <title>Involvement of the leucine response transcription factor LeuO in regulation of the genes for sulfa drug efflux.</title>
        <authorList>
            <person name="Shimada T."/>
            <person name="Yamamoto K."/>
            <person name="Ishihama A."/>
        </authorList>
    </citation>
    <scope>OPERON STRUCTURE</scope>
    <scope>INDUCTION</scope>
    <source>
        <strain>K12 / BW25113</strain>
    </source>
</reference>
<reference key="7">
    <citation type="journal article" date="2017" name="Biosci. Biotechnol. Biochem.">
        <title>Escherichia coli yjjPB genes encode a succinate transporter important for succinate production.</title>
        <authorList>
            <person name="Fukui K."/>
            <person name="Nanatani K."/>
            <person name="Hara Y."/>
            <person name="Yamakami S."/>
            <person name="Yahagi D."/>
            <person name="Chinen A."/>
            <person name="Tokura M."/>
            <person name="Abe K."/>
        </authorList>
    </citation>
    <scope>FUNCTION</scope>
    <scope>SUBUNIT</scope>
    <scope>DISRUPTION PHENOTYPE</scope>
</reference>
<name>YJJP_ECOLI</name>
<organism>
    <name type="scientific">Escherichia coli (strain K12)</name>
    <dbReference type="NCBI Taxonomy" id="83333"/>
    <lineage>
        <taxon>Bacteria</taxon>
        <taxon>Pseudomonadati</taxon>
        <taxon>Pseudomonadota</taxon>
        <taxon>Gammaproteobacteria</taxon>
        <taxon>Enterobacterales</taxon>
        <taxon>Enterobacteriaceae</taxon>
        <taxon>Escherichia</taxon>
    </lineage>
</organism>
<evidence type="ECO:0000255" key="1"/>
<evidence type="ECO:0000269" key="2">
    <source>
    </source>
</evidence>
<evidence type="ECO:0000269" key="3">
    <source>
    </source>
</evidence>
<evidence type="ECO:0000269" key="4">
    <source>
    </source>
</evidence>
<evidence type="ECO:0000269" key="5">
    <source>
    </source>
</evidence>
<evidence type="ECO:0000303" key="6">
    <source>
    </source>
</evidence>
<evidence type="ECO:0000305" key="7"/>
<feature type="chain" id="PRO_0000169811" description="Probable succinate transporter subunit YjjP">
    <location>
        <begin position="1"/>
        <end position="256"/>
    </location>
</feature>
<feature type="topological domain" description="Cytoplasmic" evidence="7">
    <location>
        <begin position="1"/>
        <end position="113"/>
    </location>
</feature>
<feature type="transmembrane region" description="Helical" evidence="1">
    <location>
        <begin position="114"/>
        <end position="135"/>
    </location>
</feature>
<feature type="topological domain" description="Periplasmic" evidence="7">
    <location>
        <begin position="136"/>
        <end position="140"/>
    </location>
</feature>
<feature type="transmembrane region" description="Helical" evidence="1">
    <location>
        <begin position="141"/>
        <end position="158"/>
    </location>
</feature>
<feature type="topological domain" description="Cytoplasmic" evidence="7">
    <location>
        <begin position="159"/>
        <end position="168"/>
    </location>
</feature>
<feature type="transmembrane region" description="Helical" evidence="1">
    <location>
        <begin position="169"/>
        <end position="189"/>
    </location>
</feature>
<feature type="topological domain" description="Periplasmic" evidence="7">
    <location>
        <begin position="190"/>
        <end position="194"/>
    </location>
</feature>
<feature type="transmembrane region" description="Helical" evidence="1">
    <location>
        <begin position="195"/>
        <end position="215"/>
    </location>
</feature>
<feature type="topological domain" description="Cytoplasmic" evidence="7">
    <location>
        <begin position="216"/>
        <end position="228"/>
    </location>
</feature>
<feature type="transmembrane region" description="Helical" evidence="1">
    <location>
        <begin position="229"/>
        <end position="249"/>
    </location>
</feature>
<feature type="topological domain" description="Periplasmic" evidence="2">
    <location>
        <begin position="250"/>
        <end position="256"/>
    </location>
</feature>
<sequence length="256" mass="28001">MQTEQQRAVTRLCIQCGLFLLQHGAESALVDELSSRLGRALGMDSVESSISSNAIVLTTIKDGQCLTSTRKNHDRGINMHVVTEVQHIVILAEHHLLDYKGVEKRFSQIQPLRYPRWLVALMVGLSCACFCKLNNGGWDGAVITFFASTTAMYIRQLLAQRHLHPQINFCLTAFAATTISGLLLQLPTFSNTPTIAMAASVLLLVPGFPLINAVADMFKGHINTGLARWAIASLLTLATCVGVVMALTIWGLRGWV</sequence>
<accession>P0ADD5</accession>
<accession>P39402</accession>
<accession>Q2M5V2</accession>
<gene>
    <name type="primary">yjjP</name>
    <name type="ordered locus">b4364</name>
    <name type="ordered locus">JW5796</name>
</gene>
<comment type="function">
    <text evidence="5">Involved in succinate export with YjjB. Both proteins are required for export (PubMed:28673128). Contributes to succinate production under both aerobic and anaerobic conditions (PubMed:28673128).</text>
</comment>
<comment type="subunit">
    <text evidence="5">The transporter is composed of YjjB and YjjP.</text>
</comment>
<comment type="subcellular location">
    <subcellularLocation>
        <location evidence="2">Cell inner membrane</location>
        <topology evidence="1">Multi-pass membrane protein</topology>
    </subcellularLocation>
</comment>
<comment type="induction">
    <text evidence="3 4">Has 2 promoters, 1 of which is repressed by H-NS. Activated by LeuO. A monocistronic operon.</text>
</comment>
<comment type="disruption phenotype">
    <text evidence="5">Deletion of yjjPB decreases succinate production in E.coli by 70% under anaerobic conditions.</text>
</comment>
<comment type="miscellaneous">
    <text evidence="6">YjjPB constitutes a split-type ThrE family transporter.</text>
</comment>
<comment type="similarity">
    <text evidence="7">Belongs to the ThrE exporter (TC 2.A.79) family.</text>
</comment>
<comment type="sequence caution" evidence="7">
    <conflict type="erroneous initiation">
        <sequence resource="EMBL-CDS" id="AAA97263"/>
    </conflict>
    <text>Extended N-terminus.</text>
</comment>
<dbReference type="EMBL" id="U14003">
    <property type="protein sequence ID" value="AAA97263.1"/>
    <property type="status" value="ALT_INIT"/>
    <property type="molecule type" value="Genomic_DNA"/>
</dbReference>
<dbReference type="EMBL" id="U00096">
    <property type="protein sequence ID" value="AAC77320.2"/>
    <property type="molecule type" value="Genomic_DNA"/>
</dbReference>
<dbReference type="EMBL" id="AP009048">
    <property type="protein sequence ID" value="BAE78354.1"/>
    <property type="molecule type" value="Genomic_DNA"/>
</dbReference>
<dbReference type="PIR" id="S56591">
    <property type="entry name" value="S56591"/>
</dbReference>
<dbReference type="RefSeq" id="NP_418784.4">
    <property type="nucleotide sequence ID" value="NC_000913.3"/>
</dbReference>
<dbReference type="RefSeq" id="WP_001338213.1">
    <property type="nucleotide sequence ID" value="NZ_STEB01000025.1"/>
</dbReference>
<dbReference type="BioGRID" id="4259591">
    <property type="interactions" value="13"/>
</dbReference>
<dbReference type="FunCoup" id="P0ADD5">
    <property type="interactions" value="4"/>
</dbReference>
<dbReference type="STRING" id="511145.b4364"/>
<dbReference type="TCDB" id="2.A.79.2.1">
    <property type="family name" value="the threonine/serine exporter (thre) family"/>
</dbReference>
<dbReference type="PaxDb" id="511145-b4364"/>
<dbReference type="EnsemblBacteria" id="AAC77320">
    <property type="protein sequence ID" value="AAC77320"/>
    <property type="gene ID" value="b4364"/>
</dbReference>
<dbReference type="GeneID" id="948812"/>
<dbReference type="KEGG" id="ecj:JW5796"/>
<dbReference type="KEGG" id="eco:b4364"/>
<dbReference type="KEGG" id="ecoc:C3026_23575"/>
<dbReference type="PATRIC" id="fig|1411691.4.peg.2322"/>
<dbReference type="EchoBASE" id="EB2477"/>
<dbReference type="eggNOG" id="COG2966">
    <property type="taxonomic scope" value="Bacteria"/>
</dbReference>
<dbReference type="HOGENOM" id="CLU_070277_2_0_6"/>
<dbReference type="InParanoid" id="P0ADD5"/>
<dbReference type="OMA" id="RLCIQCA"/>
<dbReference type="OrthoDB" id="9813917at2"/>
<dbReference type="PhylomeDB" id="P0ADD5"/>
<dbReference type="BioCyc" id="EcoCyc:G7946-MONOMER"/>
<dbReference type="PRO" id="PR:P0ADD5"/>
<dbReference type="Proteomes" id="UP000000625">
    <property type="component" value="Chromosome"/>
</dbReference>
<dbReference type="GO" id="GO:0005886">
    <property type="term" value="C:plasma membrane"/>
    <property type="evidence" value="ECO:0000314"/>
    <property type="project" value="EcoCyc"/>
</dbReference>
<dbReference type="GO" id="GO:0022857">
    <property type="term" value="F:transmembrane transporter activity"/>
    <property type="evidence" value="ECO:0007669"/>
    <property type="project" value="InterPro"/>
</dbReference>
<dbReference type="GO" id="GO:0015744">
    <property type="term" value="P:succinate transport"/>
    <property type="evidence" value="ECO:0000315"/>
    <property type="project" value="EcoCyc"/>
</dbReference>
<dbReference type="InterPro" id="IPR010619">
    <property type="entry name" value="ThrE-like_N"/>
</dbReference>
<dbReference type="InterPro" id="IPR050539">
    <property type="entry name" value="ThrE_Dicarb/AminoAcid_Exp"/>
</dbReference>
<dbReference type="PANTHER" id="PTHR34390:SF2">
    <property type="entry name" value="SUCCINATE TRANSPORTER SUBUNIT YJJP-RELATED"/>
    <property type="match status" value="1"/>
</dbReference>
<dbReference type="PANTHER" id="PTHR34390">
    <property type="entry name" value="UPF0442 PROTEIN YJJB-RELATED"/>
    <property type="match status" value="1"/>
</dbReference>
<dbReference type="Pfam" id="PF06738">
    <property type="entry name" value="ThrE"/>
    <property type="match status" value="1"/>
</dbReference>